<accession>B4SGW0</accession>
<sequence>MIVKTRAVILREIKYRDQSKICSIYTREFGKMSIIIKGARNPKNRLSGLFSAGNVVDLVLYKKSSRDIQLATDGNLVLSPMVPEPDLERFAILYRIIDFVRHTTENDEKNLPLFTLLTGTLEQLYHTNVNFQQLYAWFLLRFVSLLGFQPSLRTCVFSGEELLPAIEALQLTELYFVMNPGGLALPKAAGSSLAKKQLIPVRLAMLLSALAATRLPAGDSIKADPREIEDLWNLLQEYCSLHLEHARGRKNLDIVSQILLK</sequence>
<comment type="function">
    <text evidence="1">Involved in DNA repair and RecF pathway recombination.</text>
</comment>
<comment type="similarity">
    <text evidence="1">Belongs to the RecO family.</text>
</comment>
<evidence type="ECO:0000255" key="1">
    <source>
        <dbReference type="HAMAP-Rule" id="MF_00201"/>
    </source>
</evidence>
<name>RECO_PELPB</name>
<proteinExistence type="inferred from homology"/>
<gene>
    <name evidence="1" type="primary">recO</name>
    <name type="ordered locus">Ppha_2799</name>
</gene>
<dbReference type="EMBL" id="CP001110">
    <property type="protein sequence ID" value="ACF44948.1"/>
    <property type="molecule type" value="Genomic_DNA"/>
</dbReference>
<dbReference type="RefSeq" id="WP_012509416.1">
    <property type="nucleotide sequence ID" value="NC_011060.1"/>
</dbReference>
<dbReference type="SMR" id="B4SGW0"/>
<dbReference type="STRING" id="324925.Ppha_2799"/>
<dbReference type="KEGG" id="pph:Ppha_2799"/>
<dbReference type="eggNOG" id="COG1381">
    <property type="taxonomic scope" value="Bacteria"/>
</dbReference>
<dbReference type="HOGENOM" id="CLU_066632_1_0_10"/>
<dbReference type="OrthoDB" id="9789152at2"/>
<dbReference type="Proteomes" id="UP000002724">
    <property type="component" value="Chromosome"/>
</dbReference>
<dbReference type="GO" id="GO:0043590">
    <property type="term" value="C:bacterial nucleoid"/>
    <property type="evidence" value="ECO:0007669"/>
    <property type="project" value="TreeGrafter"/>
</dbReference>
<dbReference type="GO" id="GO:0006310">
    <property type="term" value="P:DNA recombination"/>
    <property type="evidence" value="ECO:0007669"/>
    <property type="project" value="UniProtKB-UniRule"/>
</dbReference>
<dbReference type="GO" id="GO:0006302">
    <property type="term" value="P:double-strand break repair"/>
    <property type="evidence" value="ECO:0007669"/>
    <property type="project" value="TreeGrafter"/>
</dbReference>
<dbReference type="Gene3D" id="2.40.50.140">
    <property type="entry name" value="Nucleic acid-binding proteins"/>
    <property type="match status" value="1"/>
</dbReference>
<dbReference type="Gene3D" id="1.20.1440.120">
    <property type="entry name" value="Recombination protein O, C-terminal domain"/>
    <property type="match status" value="1"/>
</dbReference>
<dbReference type="HAMAP" id="MF_00201">
    <property type="entry name" value="RecO"/>
    <property type="match status" value="1"/>
</dbReference>
<dbReference type="InterPro" id="IPR037278">
    <property type="entry name" value="ARFGAP/RecO"/>
</dbReference>
<dbReference type="InterPro" id="IPR022572">
    <property type="entry name" value="DNA_rep/recomb_RecO_N"/>
</dbReference>
<dbReference type="InterPro" id="IPR012340">
    <property type="entry name" value="NA-bd_OB-fold"/>
</dbReference>
<dbReference type="InterPro" id="IPR003717">
    <property type="entry name" value="RecO"/>
</dbReference>
<dbReference type="InterPro" id="IPR042242">
    <property type="entry name" value="RecO_C"/>
</dbReference>
<dbReference type="NCBIfam" id="TIGR00613">
    <property type="entry name" value="reco"/>
    <property type="match status" value="1"/>
</dbReference>
<dbReference type="PANTHER" id="PTHR33991">
    <property type="entry name" value="DNA REPAIR PROTEIN RECO"/>
    <property type="match status" value="1"/>
</dbReference>
<dbReference type="PANTHER" id="PTHR33991:SF1">
    <property type="entry name" value="DNA REPAIR PROTEIN RECO"/>
    <property type="match status" value="1"/>
</dbReference>
<dbReference type="Pfam" id="PF02565">
    <property type="entry name" value="RecO_C"/>
    <property type="match status" value="1"/>
</dbReference>
<dbReference type="Pfam" id="PF11967">
    <property type="entry name" value="RecO_N"/>
    <property type="match status" value="1"/>
</dbReference>
<dbReference type="SUPFAM" id="SSF57863">
    <property type="entry name" value="ArfGap/RecO-like zinc finger"/>
    <property type="match status" value="1"/>
</dbReference>
<dbReference type="SUPFAM" id="SSF50249">
    <property type="entry name" value="Nucleic acid-binding proteins"/>
    <property type="match status" value="1"/>
</dbReference>
<reference key="1">
    <citation type="submission" date="2008-06" db="EMBL/GenBank/DDBJ databases">
        <title>Complete sequence of Pelodictyon phaeoclathratiforme BU-1.</title>
        <authorList>
            <consortium name="US DOE Joint Genome Institute"/>
            <person name="Lucas S."/>
            <person name="Copeland A."/>
            <person name="Lapidus A."/>
            <person name="Glavina del Rio T."/>
            <person name="Dalin E."/>
            <person name="Tice H."/>
            <person name="Bruce D."/>
            <person name="Goodwin L."/>
            <person name="Pitluck S."/>
            <person name="Schmutz J."/>
            <person name="Larimer F."/>
            <person name="Land M."/>
            <person name="Hauser L."/>
            <person name="Kyrpides N."/>
            <person name="Mikhailova N."/>
            <person name="Liu Z."/>
            <person name="Li T."/>
            <person name="Zhao F."/>
            <person name="Overmann J."/>
            <person name="Bryant D.A."/>
            <person name="Richardson P."/>
        </authorList>
    </citation>
    <scope>NUCLEOTIDE SEQUENCE [LARGE SCALE GENOMIC DNA]</scope>
    <source>
        <strain>DSM 5477 / BU-1</strain>
    </source>
</reference>
<keyword id="KW-0227">DNA damage</keyword>
<keyword id="KW-0233">DNA recombination</keyword>
<keyword id="KW-0234">DNA repair</keyword>
<keyword id="KW-1185">Reference proteome</keyword>
<feature type="chain" id="PRO_1000099396" description="DNA repair protein RecO">
    <location>
        <begin position="1"/>
        <end position="261"/>
    </location>
</feature>
<organism>
    <name type="scientific">Pelodictyon phaeoclathratiforme (strain DSM 5477 / BU-1)</name>
    <dbReference type="NCBI Taxonomy" id="324925"/>
    <lineage>
        <taxon>Bacteria</taxon>
        <taxon>Pseudomonadati</taxon>
        <taxon>Chlorobiota</taxon>
        <taxon>Chlorobiia</taxon>
        <taxon>Chlorobiales</taxon>
        <taxon>Chlorobiaceae</taxon>
        <taxon>Chlorobium/Pelodictyon group</taxon>
        <taxon>Pelodictyon</taxon>
    </lineage>
</organism>
<protein>
    <recommendedName>
        <fullName evidence="1">DNA repair protein RecO</fullName>
    </recommendedName>
    <alternativeName>
        <fullName evidence="1">Recombination protein O</fullName>
    </alternativeName>
</protein>